<gene>
    <name evidence="1" type="primary">infA</name>
    <name type="ordered locus">Veis_4823</name>
</gene>
<accession>A1WSA8</accession>
<name>IF1_VEREI</name>
<protein>
    <recommendedName>
        <fullName evidence="1">Translation initiation factor IF-1</fullName>
    </recommendedName>
</protein>
<reference key="1">
    <citation type="submission" date="2006-12" db="EMBL/GenBank/DDBJ databases">
        <title>Complete sequence of chromosome 1 of Verminephrobacter eiseniae EF01-2.</title>
        <authorList>
            <person name="Copeland A."/>
            <person name="Lucas S."/>
            <person name="Lapidus A."/>
            <person name="Barry K."/>
            <person name="Detter J.C."/>
            <person name="Glavina del Rio T."/>
            <person name="Dalin E."/>
            <person name="Tice H."/>
            <person name="Pitluck S."/>
            <person name="Chertkov O."/>
            <person name="Brettin T."/>
            <person name="Bruce D."/>
            <person name="Han C."/>
            <person name="Tapia R."/>
            <person name="Gilna P."/>
            <person name="Schmutz J."/>
            <person name="Larimer F."/>
            <person name="Land M."/>
            <person name="Hauser L."/>
            <person name="Kyrpides N."/>
            <person name="Kim E."/>
            <person name="Stahl D."/>
            <person name="Richardson P."/>
        </authorList>
    </citation>
    <scope>NUCLEOTIDE SEQUENCE [LARGE SCALE GENOMIC DNA]</scope>
    <source>
        <strain>EF01-2</strain>
    </source>
</reference>
<keyword id="KW-0963">Cytoplasm</keyword>
<keyword id="KW-0396">Initiation factor</keyword>
<keyword id="KW-0648">Protein biosynthesis</keyword>
<keyword id="KW-1185">Reference proteome</keyword>
<keyword id="KW-0694">RNA-binding</keyword>
<keyword id="KW-0699">rRNA-binding</keyword>
<proteinExistence type="inferred from homology"/>
<organism>
    <name type="scientific">Verminephrobacter eiseniae (strain EF01-2)</name>
    <dbReference type="NCBI Taxonomy" id="391735"/>
    <lineage>
        <taxon>Bacteria</taxon>
        <taxon>Pseudomonadati</taxon>
        <taxon>Pseudomonadota</taxon>
        <taxon>Betaproteobacteria</taxon>
        <taxon>Burkholderiales</taxon>
        <taxon>Comamonadaceae</taxon>
        <taxon>Verminephrobacter</taxon>
    </lineage>
</organism>
<comment type="function">
    <text evidence="1">One of the essential components for the initiation of protein synthesis. Stabilizes the binding of IF-2 and IF-3 on the 30S subunit to which N-formylmethionyl-tRNA(fMet) subsequently binds. Helps modulate mRNA selection, yielding the 30S pre-initiation complex (PIC). Upon addition of the 50S ribosomal subunit IF-1, IF-2 and IF-3 are released leaving the mature 70S translation initiation complex.</text>
</comment>
<comment type="subunit">
    <text evidence="1">Component of the 30S ribosomal translation pre-initiation complex which assembles on the 30S ribosome in the order IF-2 and IF-3, IF-1 and N-formylmethionyl-tRNA(fMet); mRNA recruitment can occur at any time during PIC assembly.</text>
</comment>
<comment type="subcellular location">
    <subcellularLocation>
        <location evidence="1">Cytoplasm</location>
    </subcellularLocation>
</comment>
<comment type="similarity">
    <text evidence="1">Belongs to the IF-1 family.</text>
</comment>
<sequence>MAKEELIEMQGSVTEVLPDSRFRVTLDNGHQLIAYTGGKMRKHHIRILAGDKVSLEMSPYDLSKGRITFRHLAGRGPGPSSSR</sequence>
<evidence type="ECO:0000255" key="1">
    <source>
        <dbReference type="HAMAP-Rule" id="MF_00075"/>
    </source>
</evidence>
<dbReference type="EMBL" id="CP000542">
    <property type="protein sequence ID" value="ABM60515.1"/>
    <property type="molecule type" value="Genomic_DNA"/>
</dbReference>
<dbReference type="RefSeq" id="WP_011812493.1">
    <property type="nucleotide sequence ID" value="NC_008786.1"/>
</dbReference>
<dbReference type="SMR" id="A1WSA8"/>
<dbReference type="STRING" id="391735.Veis_4823"/>
<dbReference type="GeneID" id="76463089"/>
<dbReference type="KEGG" id="vei:Veis_4823"/>
<dbReference type="eggNOG" id="COG0361">
    <property type="taxonomic scope" value="Bacteria"/>
</dbReference>
<dbReference type="HOGENOM" id="CLU_151267_4_1_4"/>
<dbReference type="OrthoDB" id="9803250at2"/>
<dbReference type="Proteomes" id="UP000000374">
    <property type="component" value="Chromosome"/>
</dbReference>
<dbReference type="GO" id="GO:0005829">
    <property type="term" value="C:cytosol"/>
    <property type="evidence" value="ECO:0007669"/>
    <property type="project" value="TreeGrafter"/>
</dbReference>
<dbReference type="GO" id="GO:0043022">
    <property type="term" value="F:ribosome binding"/>
    <property type="evidence" value="ECO:0007669"/>
    <property type="project" value="UniProtKB-UniRule"/>
</dbReference>
<dbReference type="GO" id="GO:0019843">
    <property type="term" value="F:rRNA binding"/>
    <property type="evidence" value="ECO:0007669"/>
    <property type="project" value="UniProtKB-UniRule"/>
</dbReference>
<dbReference type="GO" id="GO:0003743">
    <property type="term" value="F:translation initiation factor activity"/>
    <property type="evidence" value="ECO:0007669"/>
    <property type="project" value="UniProtKB-UniRule"/>
</dbReference>
<dbReference type="CDD" id="cd04451">
    <property type="entry name" value="S1_IF1"/>
    <property type="match status" value="1"/>
</dbReference>
<dbReference type="FunFam" id="2.40.50.140:FF:000002">
    <property type="entry name" value="Translation initiation factor IF-1"/>
    <property type="match status" value="1"/>
</dbReference>
<dbReference type="Gene3D" id="2.40.50.140">
    <property type="entry name" value="Nucleic acid-binding proteins"/>
    <property type="match status" value="1"/>
</dbReference>
<dbReference type="HAMAP" id="MF_00075">
    <property type="entry name" value="IF_1"/>
    <property type="match status" value="1"/>
</dbReference>
<dbReference type="InterPro" id="IPR012340">
    <property type="entry name" value="NA-bd_OB-fold"/>
</dbReference>
<dbReference type="InterPro" id="IPR006196">
    <property type="entry name" value="RNA-binding_domain_S1_IF1"/>
</dbReference>
<dbReference type="InterPro" id="IPR004368">
    <property type="entry name" value="TIF_IF1"/>
</dbReference>
<dbReference type="NCBIfam" id="TIGR00008">
    <property type="entry name" value="infA"/>
    <property type="match status" value="1"/>
</dbReference>
<dbReference type="PANTHER" id="PTHR33370">
    <property type="entry name" value="TRANSLATION INITIATION FACTOR IF-1, CHLOROPLASTIC"/>
    <property type="match status" value="1"/>
</dbReference>
<dbReference type="PANTHER" id="PTHR33370:SF1">
    <property type="entry name" value="TRANSLATION INITIATION FACTOR IF-1, CHLOROPLASTIC"/>
    <property type="match status" value="1"/>
</dbReference>
<dbReference type="Pfam" id="PF01176">
    <property type="entry name" value="eIF-1a"/>
    <property type="match status" value="1"/>
</dbReference>
<dbReference type="SUPFAM" id="SSF50249">
    <property type="entry name" value="Nucleic acid-binding proteins"/>
    <property type="match status" value="1"/>
</dbReference>
<dbReference type="PROSITE" id="PS50832">
    <property type="entry name" value="S1_IF1_TYPE"/>
    <property type="match status" value="1"/>
</dbReference>
<feature type="chain" id="PRO_0000338946" description="Translation initiation factor IF-1">
    <location>
        <begin position="1"/>
        <end position="83"/>
    </location>
</feature>
<feature type="domain" description="S1-like" evidence="1">
    <location>
        <begin position="1"/>
        <end position="72"/>
    </location>
</feature>